<accession>A0A3G9K3K9</accession>
<feature type="chain" id="PRO_0000455704" description="Hispidin synthase">
    <location>
        <begin position="1"/>
        <end position="1678"/>
    </location>
</feature>
<feature type="domain" description="Carrier 1" evidence="2">
    <location>
        <begin position="586"/>
        <end position="661"/>
    </location>
</feature>
<feature type="domain" description="Ketosynthase family 3 (KS3)" evidence="3 8">
    <location>
        <begin position="683"/>
        <end position="1108"/>
    </location>
</feature>
<feature type="domain" description="Carrier 2" evidence="2">
    <location>
        <begin position="1597"/>
        <end position="1672"/>
    </location>
</feature>
<feature type="region of interest" description="Adenylation (A) domain" evidence="1 8">
    <location>
        <begin position="33"/>
        <end position="453"/>
    </location>
</feature>
<feature type="region of interest" description="Malonyl-CoA:ACP transacylase (MAT) domain" evidence="1 8">
    <location>
        <begin position="1201"/>
        <end position="1499"/>
    </location>
</feature>
<feature type="region of interest" description="Disordered" evidence="4">
    <location>
        <begin position="1562"/>
        <end position="1582"/>
    </location>
</feature>
<feature type="compositionally biased region" description="Polar residues" evidence="4">
    <location>
        <begin position="1564"/>
        <end position="1576"/>
    </location>
</feature>
<feature type="active site" description="For beta-ketoacyl synthase activity" evidence="3">
    <location>
        <position position="852"/>
    </location>
</feature>
<feature type="active site" description="For beta-ketoacyl synthase activity" evidence="3">
    <location>
        <position position="988"/>
    </location>
</feature>
<feature type="active site" description="For beta-ketoacyl synthase activity" evidence="3">
    <location>
        <position position="1029"/>
    </location>
</feature>
<feature type="modified residue" description="O-(pantetheine 4'-phosphoryl)serine" evidence="2">
    <location>
        <position position="620"/>
    </location>
</feature>
<feature type="modified residue" description="O-(pantetheine 4'-phosphoryl)serine" evidence="2">
    <location>
        <position position="1632"/>
    </location>
</feature>
<protein>
    <recommendedName>
        <fullName evidence="6">Hispidin synthase</fullName>
        <shortName evidence="6">HispS</shortName>
        <ecNumber evidence="5">2.3.1.-</ecNumber>
    </recommendedName>
    <alternativeName>
        <fullName evidence="6">Fungal bioluminescence cycle protein hips</fullName>
    </alternativeName>
    <alternativeName>
        <fullName evidence="6">PKS-NRPS hybrid synthetase hips</fullName>
    </alternativeName>
</protein>
<dbReference type="EC" id="2.3.1.-" evidence="5"/>
<dbReference type="EMBL" id="LC435355">
    <property type="protein sequence ID" value="BBH43485.1"/>
    <property type="molecule type" value="mRNA"/>
</dbReference>
<dbReference type="SMR" id="A0A3G9K3K9"/>
<dbReference type="GO" id="GO:0004312">
    <property type="term" value="F:fatty acid synthase activity"/>
    <property type="evidence" value="ECO:0007669"/>
    <property type="project" value="TreeGrafter"/>
</dbReference>
<dbReference type="GO" id="GO:0031177">
    <property type="term" value="F:phosphopantetheine binding"/>
    <property type="evidence" value="ECO:0007669"/>
    <property type="project" value="InterPro"/>
</dbReference>
<dbReference type="GO" id="GO:0006633">
    <property type="term" value="P:fatty acid biosynthetic process"/>
    <property type="evidence" value="ECO:0007669"/>
    <property type="project" value="TreeGrafter"/>
</dbReference>
<dbReference type="CDD" id="cd00833">
    <property type="entry name" value="PKS"/>
    <property type="match status" value="1"/>
</dbReference>
<dbReference type="Gene3D" id="3.30.70.3290">
    <property type="match status" value="1"/>
</dbReference>
<dbReference type="Gene3D" id="3.40.47.10">
    <property type="match status" value="1"/>
</dbReference>
<dbReference type="Gene3D" id="1.10.1200.10">
    <property type="entry name" value="ACP-like"/>
    <property type="match status" value="2"/>
</dbReference>
<dbReference type="Gene3D" id="3.40.366.10">
    <property type="entry name" value="Malonyl-Coenzyme A Acyl Carrier Protein, domain 2"/>
    <property type="match status" value="1"/>
</dbReference>
<dbReference type="Gene3D" id="3.40.50.12780">
    <property type="entry name" value="N-terminal domain of ligase-like"/>
    <property type="match status" value="1"/>
</dbReference>
<dbReference type="InterPro" id="IPR001227">
    <property type="entry name" value="Ac_transferase_dom_sf"/>
</dbReference>
<dbReference type="InterPro" id="IPR036736">
    <property type="entry name" value="ACP-like_sf"/>
</dbReference>
<dbReference type="InterPro" id="IPR014043">
    <property type="entry name" value="Acyl_transferase_dom"/>
</dbReference>
<dbReference type="InterPro" id="IPR016035">
    <property type="entry name" value="Acyl_Trfase/lysoPLipase"/>
</dbReference>
<dbReference type="InterPro" id="IPR000873">
    <property type="entry name" value="AMP-dep_synth/lig_dom"/>
</dbReference>
<dbReference type="InterPro" id="IPR042099">
    <property type="entry name" value="ANL_N_sf"/>
</dbReference>
<dbReference type="InterPro" id="IPR014031">
    <property type="entry name" value="Ketoacyl_synth_C"/>
</dbReference>
<dbReference type="InterPro" id="IPR014030">
    <property type="entry name" value="Ketoacyl_synth_N"/>
</dbReference>
<dbReference type="InterPro" id="IPR016036">
    <property type="entry name" value="Malonyl_transacylase_ACP-bd"/>
</dbReference>
<dbReference type="InterPro" id="IPR020841">
    <property type="entry name" value="PKS_Beta-ketoAc_synthase_dom"/>
</dbReference>
<dbReference type="InterPro" id="IPR050091">
    <property type="entry name" value="PKS_NRPS_Biosynth_Enz"/>
</dbReference>
<dbReference type="InterPro" id="IPR020806">
    <property type="entry name" value="PKS_PP-bd"/>
</dbReference>
<dbReference type="InterPro" id="IPR009081">
    <property type="entry name" value="PP-bd_ACP"/>
</dbReference>
<dbReference type="InterPro" id="IPR006162">
    <property type="entry name" value="Ppantetheine_attach_site"/>
</dbReference>
<dbReference type="InterPro" id="IPR016039">
    <property type="entry name" value="Thiolase-like"/>
</dbReference>
<dbReference type="PANTHER" id="PTHR43775">
    <property type="entry name" value="FATTY ACID SYNTHASE"/>
    <property type="match status" value="1"/>
</dbReference>
<dbReference type="PANTHER" id="PTHR43775:SF37">
    <property type="entry name" value="SI:DKEY-61P9.11"/>
    <property type="match status" value="1"/>
</dbReference>
<dbReference type="Pfam" id="PF00698">
    <property type="entry name" value="Acyl_transf_1"/>
    <property type="match status" value="1"/>
</dbReference>
<dbReference type="Pfam" id="PF00501">
    <property type="entry name" value="AMP-binding"/>
    <property type="match status" value="1"/>
</dbReference>
<dbReference type="Pfam" id="PF23562">
    <property type="entry name" value="AMP-binding_C_3"/>
    <property type="match status" value="1"/>
</dbReference>
<dbReference type="Pfam" id="PF22621">
    <property type="entry name" value="CurL-like_PKS_C"/>
    <property type="match status" value="1"/>
</dbReference>
<dbReference type="Pfam" id="PF00109">
    <property type="entry name" value="ketoacyl-synt"/>
    <property type="match status" value="1"/>
</dbReference>
<dbReference type="Pfam" id="PF02801">
    <property type="entry name" value="Ketoacyl-synt_C"/>
    <property type="match status" value="1"/>
</dbReference>
<dbReference type="Pfam" id="PF00550">
    <property type="entry name" value="PP-binding"/>
    <property type="match status" value="2"/>
</dbReference>
<dbReference type="SMART" id="SM00827">
    <property type="entry name" value="PKS_AT"/>
    <property type="match status" value="1"/>
</dbReference>
<dbReference type="SMART" id="SM00825">
    <property type="entry name" value="PKS_KS"/>
    <property type="match status" value="1"/>
</dbReference>
<dbReference type="SMART" id="SM00823">
    <property type="entry name" value="PKS_PP"/>
    <property type="match status" value="2"/>
</dbReference>
<dbReference type="SUPFAM" id="SSF56801">
    <property type="entry name" value="Acetyl-CoA synthetase-like"/>
    <property type="match status" value="1"/>
</dbReference>
<dbReference type="SUPFAM" id="SSF47336">
    <property type="entry name" value="ACP-like"/>
    <property type="match status" value="2"/>
</dbReference>
<dbReference type="SUPFAM" id="SSF52151">
    <property type="entry name" value="FabD/lysophospholipase-like"/>
    <property type="match status" value="1"/>
</dbReference>
<dbReference type="SUPFAM" id="SSF55048">
    <property type="entry name" value="Probable ACP-binding domain of malonyl-CoA ACP transacylase"/>
    <property type="match status" value="1"/>
</dbReference>
<dbReference type="SUPFAM" id="SSF53901">
    <property type="entry name" value="Thiolase-like"/>
    <property type="match status" value="1"/>
</dbReference>
<dbReference type="PROSITE" id="PS50075">
    <property type="entry name" value="CARRIER"/>
    <property type="match status" value="2"/>
</dbReference>
<dbReference type="PROSITE" id="PS52004">
    <property type="entry name" value="KS3_2"/>
    <property type="match status" value="1"/>
</dbReference>
<dbReference type="PROSITE" id="PS00012">
    <property type="entry name" value="PHOSPHOPANTETHEINE"/>
    <property type="match status" value="1"/>
</dbReference>
<name>HIPS_NEONM</name>
<proteinExistence type="evidence at protein level"/>
<keyword id="KW-0596">Phosphopantetheine</keyword>
<keyword id="KW-0597">Phosphoprotein</keyword>
<keyword id="KW-0808">Transferase</keyword>
<organism>
    <name type="scientific">Neonothopanus nambi</name>
    <name type="common">Agaricus nambi</name>
    <dbReference type="NCBI Taxonomy" id="71958"/>
    <lineage>
        <taxon>Eukaryota</taxon>
        <taxon>Fungi</taxon>
        <taxon>Dikarya</taxon>
        <taxon>Basidiomycota</taxon>
        <taxon>Agaricomycotina</taxon>
        <taxon>Agaricomycetes</taxon>
        <taxon>Agaricomycetidae</taxon>
        <taxon>Agaricales</taxon>
        <taxon>Marasmiineae</taxon>
        <taxon>Omphalotaceae</taxon>
        <taxon>Neonothopanus</taxon>
    </lineage>
</organism>
<gene>
    <name evidence="6" type="primary">hisps</name>
</gene>
<comment type="function">
    <text evidence="5 8">PKS-NRPS hybrid synthetase; part of the gene cluster that mediates the fungal bioluminescence cycle (PubMed:30478037). Performs the biosynthesis of hispidin from caffeic acid by two cycles of addition of malonyl units followed by lactonization (PubMed:30478037). The fungal bioluminescence cycle begins with the hispidin synthetase that catalyzes the formation of hispidin which is further hydroxylated by the hispidin-3-hydroxylase, yielding the fungal luciferin 3-hydroxyhispidin. The luciferase then produces an endoperoxide as a high-energy intermediate with decomposition that yields oxyluciferin (also known as caffeoylpyruvate) and light emission. Oxyluciferin can be recycled to caffeic acid by caffeoylpyruvate hydrolase (Probable) (PubMed:30478037).</text>
</comment>
<comment type="catalytic activity">
    <reaction evidence="5">
        <text>(E)-caffeate + 2 malonyl-CoA + ATP + H(+) = hispidin + AMP + 2 CO2 + diphosphate + 2 CoA</text>
        <dbReference type="Rhea" id="RHEA:71123"/>
        <dbReference type="ChEBI" id="CHEBI:15378"/>
        <dbReference type="ChEBI" id="CHEBI:16526"/>
        <dbReference type="ChEBI" id="CHEBI:30616"/>
        <dbReference type="ChEBI" id="CHEBI:33019"/>
        <dbReference type="ChEBI" id="CHEBI:57287"/>
        <dbReference type="ChEBI" id="CHEBI:57384"/>
        <dbReference type="ChEBI" id="CHEBI:57770"/>
        <dbReference type="ChEBI" id="CHEBI:190288"/>
        <dbReference type="ChEBI" id="CHEBI:456215"/>
    </reaction>
    <physiologicalReaction direction="left-to-right" evidence="5">
        <dbReference type="Rhea" id="RHEA:71124"/>
    </physiologicalReaction>
</comment>
<comment type="pathway">
    <text evidence="5">Secondary metabolite biosynthesis.</text>
</comment>
<comment type="domain">
    <text evidence="8">The architecture of hips is the following one: adenylation (A), phosphopantetheine-binding/thiolation (T), beta-ketoacyl synthase (KS) and malonyl-CoA:ACP transacylase (MAT). Hips homologs in bioluminescent species lack two domains, the ketoreductase (KR) and the dehydratase (DH) domains.</text>
</comment>
<comment type="biotechnology">
    <text evidence="5">The availability of a complete eukaryotic luciferin biosynthesis pathway provides several applications in biomedicine and bioengineering.</text>
</comment>
<comment type="similarity">
    <text evidence="7">In the N-terminal section; belongs to the NRP synthetase family.</text>
</comment>
<evidence type="ECO:0000255" key="1"/>
<evidence type="ECO:0000255" key="2">
    <source>
        <dbReference type="PROSITE-ProRule" id="PRU00258"/>
    </source>
</evidence>
<evidence type="ECO:0000255" key="3">
    <source>
        <dbReference type="PROSITE-ProRule" id="PRU01348"/>
    </source>
</evidence>
<evidence type="ECO:0000256" key="4">
    <source>
        <dbReference type="SAM" id="MobiDB-lite"/>
    </source>
</evidence>
<evidence type="ECO:0000269" key="5">
    <source>
    </source>
</evidence>
<evidence type="ECO:0000303" key="6">
    <source>
    </source>
</evidence>
<evidence type="ECO:0000305" key="7"/>
<evidence type="ECO:0000305" key="8">
    <source>
    </source>
</evidence>
<sequence>MNSSKNPPSTLLDVFLDTARNLDTALRNVLECGEHRWSYRELDTVSSALAQHLRYTVGLSPTVAVISENHPYILALMLAVWKLGGTFAPIDVHSPAELVAGMLNIVSPSCLVIPSSDVTNQTLACDLNIPVVAFHPHQSTIPELNKKYLTDSQISPDLPFSDPNRPALYLFTSSATSRSNLKCVPLTHTFILRNSLSKRAWCKRMRPETDFDGIRVLGWAPWSHVLAHMQDIGPLTLLNAGCYVFATTPSTYPTELKDDRDLISCAANAIMYKGVKSFACLPFVLGGLKALCESEPSVKAHLQVEERAQLLKSLQHMEILECGGAMLEASVASWAIENCIPISIGIGMTETGGALFAGPVQAIKTGFSSEDKFIEDATYLLVKDDHESHAEEDINEGELVVKSKMLPRGYLGYSDPSFSVDDAGWVTFRTGDRYSVTPDGKFSWLGRNTDFIQMTSGETLDPRPIESSLCESSLISRACVIGDKFLNGPAAAVCAIIELEPTAVEKGQAHSREIARVFAPINRDLPPPLRIAWSHVLVLQPSEKIPMTKKGTIFRKKIEQVFGSALGGSSGDNSQATADAGVVRRDELSNTVKHIISRVLGVSDDELLWTLSFAELGMTSALATRIANELNEVLVGVNLPINACYIHVDLPSLSNAVYAKLAHLKLPDRTPEPRQAPVENSGGKEIVVVGQAFRLPGSINDVASLRDAFLARQASSIITEIPSDRWDHASFYPKDIRFNKAGLVDIANYDHSFFGLTATEALYLSPTMRLALEVSFEALENANIPVSQLKGSQTAVYVATTDDGFETLLNAEAGYDAYTRFYGTGRAASTASGRISCLLDVHGPSITVDTACSGGAVCIDQAIDYLQSSSAADTAIICASNTHCWPGSFRFLSAQGMVSPGGRCATFTTDADGYVPSEGAVAFILKTREAAMRDKDTILATIKATQISHNGRSQGLVAPNVNSQADLHRSLLQKAGLSPADIRFIEAHGTGTSLGDLSEIQAINDAYTSSQPRTTGPLIVSASKTVIGHTEPAGPLVGMLSVLNSFKEGAVPGLAHLTADNLNPSLDCSSVPLLIPYQPVHLAAPKPHRAAVRSYGFSGTLGGIVLEAPDEERLEEELPNDKPMLFVVSAKTHTALIEYLGRYLEFLLQANPQDFCDICYTSCVGREHYRYRYACVANDMEDLIGQLQKRLGSKVPPKPSYKRGALAFAFSGQGTQFRGMATELAKAYSGFRKIVSDLAKRASELSGHAIDRFLLAYDIGAENVAPDSEADQICIFVYQCSVLRWLQTMGIRPSAVIGHSLGEISASVAAGALSLDSALDLVISRARLLRSSASAPAGMAAMSASQDEVVELIGKLDLDKANSLSVSVINGPQNTVVSGSSAAIESIVALAKGRKIKASALNINQAFHSPYVDSAVPGLRAWSEKHISSARPLQIPLYSTLLGAQISEGEMLNPDHWVDHARKPVQFAQAATTMKESFTGVIIDIGPQVVAWSLLLSNGLTSVTALAAKRGRSQQVAFLSALADLYQDYGVVPDFVGLYAQQEDASRLKKTDILTYPFQRGEETLSSGSSTPTLENTDLDSGKELLMGPTRGLLRADDLRDSIVSSVKDVLELKSNEDLDLSESLNALGMDSIMFAQLRKRIGEGLGLNVPMVFLSDAFSIGEMVSNLVEQAEASEDN</sequence>
<reference key="1">
    <citation type="journal article" date="2018" name="Proc. Natl. Acad. Sci. U.S.A.">
        <title>Genetically encodable bioluminescent system from fungi.</title>
        <authorList>
            <person name="Kotlobay A.A."/>
            <person name="Sarkisyan K.S."/>
            <person name="Mokrushina Y.A."/>
            <person name="Marcet-Houben M."/>
            <person name="Serebrovskaya E.O."/>
            <person name="Markina N.M."/>
            <person name="Gonzalez Somermeyer L."/>
            <person name="Gorokhovatsky A.Y."/>
            <person name="Vvedensky A."/>
            <person name="Purtov K.V."/>
            <person name="Petushkov V.N."/>
            <person name="Rodionova N.S."/>
            <person name="Chepurnyh T.V."/>
            <person name="Fakhranurova L.I."/>
            <person name="Guglya E.B."/>
            <person name="Ziganshin R."/>
            <person name="Tsarkova A.S."/>
            <person name="Kaskova Z.M."/>
            <person name="Shender V."/>
            <person name="Abakumov M."/>
            <person name="Abakumova T.O."/>
            <person name="Povolotskaya I.S."/>
            <person name="Eroshkin F.M."/>
            <person name="Zaraisky A.G."/>
            <person name="Mishin A.S."/>
            <person name="Dolgov S.V."/>
            <person name="Mitiouchkina T.Y."/>
            <person name="Kopantzev E.P."/>
            <person name="Waldenmaier H.E."/>
            <person name="Oliveira A.G."/>
            <person name="Oba Y."/>
            <person name="Barsova E."/>
            <person name="Bogdanova E.A."/>
            <person name="Gabaldon T."/>
            <person name="Stevani C.V."/>
            <person name="Lukyanov S."/>
            <person name="Smirnov I.V."/>
            <person name="Gitelson J.I."/>
            <person name="Kondrashov F.A."/>
            <person name="Yampolsky I.V."/>
        </authorList>
    </citation>
    <scope>NUCLEOTIDE SEQUENCE [MRNA]</scope>
    <scope>IDENTIFICATION</scope>
    <scope>FUNCTION</scope>
    <scope>DOMAIN</scope>
    <scope>CATALYTIC ACTIVITY</scope>
    <scope>PATHWAY</scope>
    <scope>BIOTECHNOLOGY</scope>
</reference>